<sequence>MQSNLSSFNKIEQKINGSRKISNYLIGGMLSIGGIGFILAAISSYTGRDLLPLGNPSTLLFIPQGIIMGAYGVIANLLNIYLWYLVFINFGSGYNFFDKDSQSVEIKRKGLFKDIEVKLSFDEIKSVKLDISEGFNPRRRIALVLKGRKKPLPLSGAGELKPLLQVEEEGARLAKFLNVNLEGLK</sequence>
<comment type="function">
    <text>Seems to be required for the assembly of the photosystem I complex.</text>
</comment>
<comment type="subcellular location">
    <subcellularLocation>
        <location evidence="1">Cellular thylakoid membrane</location>
        <topology evidence="1">Multi-pass membrane protein</topology>
    </subcellularLocation>
</comment>
<comment type="similarity">
    <text evidence="3">Belongs to the Ycf4 family.</text>
</comment>
<organism>
    <name type="scientific">Prochlorococcus marinus subsp. pastoris (strain CCMP1986 / NIES-2087 / MED4)</name>
    <dbReference type="NCBI Taxonomy" id="59919"/>
    <lineage>
        <taxon>Bacteria</taxon>
        <taxon>Bacillati</taxon>
        <taxon>Cyanobacteriota</taxon>
        <taxon>Cyanophyceae</taxon>
        <taxon>Synechococcales</taxon>
        <taxon>Prochlorococcaceae</taxon>
        <taxon>Prochlorococcus</taxon>
    </lineage>
</organism>
<keyword id="KW-0472">Membrane</keyword>
<keyword id="KW-0602">Photosynthesis</keyword>
<keyword id="KW-0793">Thylakoid</keyword>
<keyword id="KW-0812">Transmembrane</keyword>
<keyword id="KW-1133">Transmembrane helix</keyword>
<dbReference type="EMBL" id="BX548174">
    <property type="protein sequence ID" value="CAE19615.1"/>
    <property type="molecule type" value="Genomic_DNA"/>
</dbReference>
<dbReference type="RefSeq" id="WP_011132790.1">
    <property type="nucleotide sequence ID" value="NC_005072.1"/>
</dbReference>
<dbReference type="STRING" id="59919.PMM1156"/>
<dbReference type="KEGG" id="pmm:PMM1156"/>
<dbReference type="eggNOG" id="ENOG502Z7YX">
    <property type="taxonomic scope" value="Bacteria"/>
</dbReference>
<dbReference type="HOGENOM" id="CLU_095465_0_0_3"/>
<dbReference type="OrthoDB" id="7059574at2"/>
<dbReference type="Proteomes" id="UP000001026">
    <property type="component" value="Chromosome"/>
</dbReference>
<dbReference type="GO" id="GO:0009522">
    <property type="term" value="C:photosystem I"/>
    <property type="evidence" value="ECO:0007669"/>
    <property type="project" value="InterPro"/>
</dbReference>
<dbReference type="GO" id="GO:0031676">
    <property type="term" value="C:plasma membrane-derived thylakoid membrane"/>
    <property type="evidence" value="ECO:0007669"/>
    <property type="project" value="UniProtKB-SubCell"/>
</dbReference>
<dbReference type="GO" id="GO:0015979">
    <property type="term" value="P:photosynthesis"/>
    <property type="evidence" value="ECO:0007669"/>
    <property type="project" value="UniProtKB-UniRule"/>
</dbReference>
<dbReference type="HAMAP" id="MF_00437">
    <property type="entry name" value="Ycf4"/>
    <property type="match status" value="1"/>
</dbReference>
<dbReference type="InterPro" id="IPR003359">
    <property type="entry name" value="PSI_Ycf4_assembly"/>
</dbReference>
<dbReference type="NCBIfam" id="NF002712">
    <property type="entry name" value="PRK02542.1"/>
    <property type="match status" value="1"/>
</dbReference>
<dbReference type="Pfam" id="PF02392">
    <property type="entry name" value="Ycf4"/>
    <property type="match status" value="1"/>
</dbReference>
<accession>Q7V0U6</accession>
<proteinExistence type="inferred from homology"/>
<reference key="1">
    <citation type="journal article" date="2003" name="Nature">
        <title>Genome divergence in two Prochlorococcus ecotypes reflects oceanic niche differentiation.</title>
        <authorList>
            <person name="Rocap G."/>
            <person name="Larimer F.W."/>
            <person name="Lamerdin J.E."/>
            <person name="Malfatti S."/>
            <person name="Chain P."/>
            <person name="Ahlgren N.A."/>
            <person name="Arellano A."/>
            <person name="Coleman M."/>
            <person name="Hauser L."/>
            <person name="Hess W.R."/>
            <person name="Johnson Z.I."/>
            <person name="Land M.L."/>
            <person name="Lindell D."/>
            <person name="Post A.F."/>
            <person name="Regala W."/>
            <person name="Shah M."/>
            <person name="Shaw S.L."/>
            <person name="Steglich C."/>
            <person name="Sullivan M.B."/>
            <person name="Ting C.S."/>
            <person name="Tolonen A."/>
            <person name="Webb E.A."/>
            <person name="Zinser E.R."/>
            <person name="Chisholm S.W."/>
        </authorList>
    </citation>
    <scope>NUCLEOTIDE SEQUENCE [LARGE SCALE GENOMIC DNA]</scope>
    <source>
        <strain>CCMP1986 / NIES-2087 / MED4</strain>
    </source>
</reference>
<gene>
    <name type="primary">ycf4</name>
    <name type="ordered locus">PMM1156</name>
</gene>
<protein>
    <recommendedName>
        <fullName>Photosystem I assembly protein Ycf4</fullName>
    </recommendedName>
</protein>
<feature type="chain" id="PRO_0000217636" description="Photosystem I assembly protein Ycf4">
    <location>
        <begin position="1"/>
        <end position="185"/>
    </location>
</feature>
<feature type="transmembrane region" description="Helical" evidence="2">
    <location>
        <begin position="21"/>
        <end position="43"/>
    </location>
</feature>
<feature type="transmembrane region" description="Helical" evidence="2">
    <location>
        <begin position="65"/>
        <end position="87"/>
    </location>
</feature>
<name>YCF4_PROMP</name>
<evidence type="ECO:0000250" key="1"/>
<evidence type="ECO:0000255" key="2"/>
<evidence type="ECO:0000305" key="3"/>